<keyword id="KW-0030">Aminoacyl-tRNA synthetase</keyword>
<keyword id="KW-0067">ATP-binding</keyword>
<keyword id="KW-0436">Ligase</keyword>
<keyword id="KW-0496">Mitochondrion</keyword>
<keyword id="KW-0547">Nucleotide-binding</keyword>
<keyword id="KW-0648">Protein biosynthesis</keyword>
<keyword id="KW-1185">Reference proteome</keyword>
<keyword id="KW-0809">Transit peptide</keyword>
<reference key="1">
    <citation type="journal article" date="2004" name="Genome Res.">
        <title>The status, quality, and expansion of the NIH full-length cDNA project: the Mammalian Gene Collection (MGC).</title>
        <authorList>
            <consortium name="The MGC Project Team"/>
        </authorList>
    </citation>
    <scope>NUCLEOTIDE SEQUENCE [LARGE SCALE MRNA]</scope>
    <source>
        <tissue>Kidney</tissue>
    </source>
</reference>
<evidence type="ECO:0000250" key="1">
    <source>
        <dbReference type="UniProtKB" id="Q7L3T8"/>
    </source>
</evidence>
<evidence type="ECO:0000255" key="2"/>
<evidence type="ECO:0000305" key="3"/>
<organism>
    <name type="scientific">Rattus norvegicus</name>
    <name type="common">Rat</name>
    <dbReference type="NCBI Taxonomy" id="10116"/>
    <lineage>
        <taxon>Eukaryota</taxon>
        <taxon>Metazoa</taxon>
        <taxon>Chordata</taxon>
        <taxon>Craniata</taxon>
        <taxon>Vertebrata</taxon>
        <taxon>Euteleostomi</taxon>
        <taxon>Mammalia</taxon>
        <taxon>Eutheria</taxon>
        <taxon>Euarchontoglires</taxon>
        <taxon>Glires</taxon>
        <taxon>Rodentia</taxon>
        <taxon>Myomorpha</taxon>
        <taxon>Muroidea</taxon>
        <taxon>Muridae</taxon>
        <taxon>Murinae</taxon>
        <taxon>Rattus</taxon>
    </lineage>
</organism>
<feature type="transit peptide" description="Mitochondrion" evidence="2">
    <location>
        <begin position="1"/>
        <end position="29"/>
    </location>
</feature>
<feature type="chain" id="PRO_0000035820" description="Probable proline--tRNA ligase, mitochondrial">
    <location>
        <begin position="30"/>
        <end position="475"/>
    </location>
</feature>
<proteinExistence type="evidence at transcript level"/>
<dbReference type="EC" id="6.1.1.15" evidence="1"/>
<dbReference type="EMBL" id="BC088403">
    <property type="protein sequence ID" value="AAH88403.1"/>
    <property type="molecule type" value="mRNA"/>
</dbReference>
<dbReference type="RefSeq" id="NP_001014086.1">
    <property type="nucleotide sequence ID" value="NM_001014064.1"/>
</dbReference>
<dbReference type="RefSeq" id="XP_006238575.1">
    <property type="nucleotide sequence ID" value="XM_006238513.5"/>
</dbReference>
<dbReference type="RefSeq" id="XP_017448872.1">
    <property type="nucleotide sequence ID" value="XM_017593383.3"/>
</dbReference>
<dbReference type="SMR" id="Q5M7W7"/>
<dbReference type="FunCoup" id="Q5M7W7">
    <property type="interactions" value="1276"/>
</dbReference>
<dbReference type="STRING" id="10116.ENSRNOP00000054281"/>
<dbReference type="iPTMnet" id="Q5M7W7"/>
<dbReference type="PhosphoSitePlus" id="Q5M7W7"/>
<dbReference type="PaxDb" id="10116-ENSRNOP00000054281"/>
<dbReference type="Ensembl" id="ENSRNOT00000057471.3">
    <property type="protein sequence ID" value="ENSRNOP00000054281.2"/>
    <property type="gene ID" value="ENSRNOG00000007327.6"/>
</dbReference>
<dbReference type="GeneID" id="313429"/>
<dbReference type="KEGG" id="rno:313429"/>
<dbReference type="AGR" id="RGD:1305345"/>
<dbReference type="CTD" id="25973"/>
<dbReference type="RGD" id="1305345">
    <property type="gene designation" value="Pars2"/>
</dbReference>
<dbReference type="eggNOG" id="KOG2324">
    <property type="taxonomic scope" value="Eukaryota"/>
</dbReference>
<dbReference type="GeneTree" id="ENSGT00390000010922"/>
<dbReference type="HOGENOM" id="CLU_016739_4_1_1"/>
<dbReference type="InParanoid" id="Q5M7W7"/>
<dbReference type="PhylomeDB" id="Q5M7W7"/>
<dbReference type="PRO" id="PR:Q5M7W7"/>
<dbReference type="Proteomes" id="UP000002494">
    <property type="component" value="Chromosome 5"/>
</dbReference>
<dbReference type="Bgee" id="ENSRNOG00000007327">
    <property type="expression patterns" value="Expressed in skeletal muscle tissue and 20 other cell types or tissues"/>
</dbReference>
<dbReference type="GO" id="GO:0005759">
    <property type="term" value="C:mitochondrial matrix"/>
    <property type="evidence" value="ECO:0007669"/>
    <property type="project" value="UniProtKB-SubCell"/>
</dbReference>
<dbReference type="GO" id="GO:0005739">
    <property type="term" value="C:mitochondrion"/>
    <property type="evidence" value="ECO:0000318"/>
    <property type="project" value="GO_Central"/>
</dbReference>
<dbReference type="GO" id="GO:0005524">
    <property type="term" value="F:ATP binding"/>
    <property type="evidence" value="ECO:0007669"/>
    <property type="project" value="UniProtKB-KW"/>
</dbReference>
<dbReference type="GO" id="GO:0004827">
    <property type="term" value="F:proline-tRNA ligase activity"/>
    <property type="evidence" value="ECO:0000318"/>
    <property type="project" value="GO_Central"/>
</dbReference>
<dbReference type="GO" id="GO:0006433">
    <property type="term" value="P:prolyl-tRNA aminoacylation"/>
    <property type="evidence" value="ECO:0000318"/>
    <property type="project" value="GO_Central"/>
</dbReference>
<dbReference type="CDD" id="cd00861">
    <property type="entry name" value="ProRS_anticodon_short"/>
    <property type="match status" value="1"/>
</dbReference>
<dbReference type="CDD" id="cd00779">
    <property type="entry name" value="ProRS_core_prok"/>
    <property type="match status" value="1"/>
</dbReference>
<dbReference type="FunFam" id="3.40.50.800:FF:000020">
    <property type="entry name" value="Probable proline--tRNA ligase, mitochondrial"/>
    <property type="match status" value="1"/>
</dbReference>
<dbReference type="FunFam" id="3.30.930.10:FF:000042">
    <property type="entry name" value="probable proline--tRNA ligase, mitochondrial"/>
    <property type="match status" value="1"/>
</dbReference>
<dbReference type="Gene3D" id="3.40.50.800">
    <property type="entry name" value="Anticodon-binding domain"/>
    <property type="match status" value="1"/>
</dbReference>
<dbReference type="Gene3D" id="3.30.930.10">
    <property type="entry name" value="Bira Bifunctional Protein, Domain 2"/>
    <property type="match status" value="1"/>
</dbReference>
<dbReference type="InterPro" id="IPR002314">
    <property type="entry name" value="aa-tRNA-synt_IIb"/>
</dbReference>
<dbReference type="InterPro" id="IPR006195">
    <property type="entry name" value="aa-tRNA-synth_II"/>
</dbReference>
<dbReference type="InterPro" id="IPR045864">
    <property type="entry name" value="aa-tRNA-synth_II/BPL/LPL"/>
</dbReference>
<dbReference type="InterPro" id="IPR004154">
    <property type="entry name" value="Anticodon-bd"/>
</dbReference>
<dbReference type="InterPro" id="IPR036621">
    <property type="entry name" value="Anticodon-bd_dom_sf"/>
</dbReference>
<dbReference type="InterPro" id="IPR002316">
    <property type="entry name" value="Pro-tRNA-ligase_IIa"/>
</dbReference>
<dbReference type="InterPro" id="IPR050062">
    <property type="entry name" value="Pro-tRNA_synthetase"/>
</dbReference>
<dbReference type="InterPro" id="IPR044140">
    <property type="entry name" value="ProRS_anticodon_short"/>
</dbReference>
<dbReference type="InterPro" id="IPR033730">
    <property type="entry name" value="ProRS_core_prok"/>
</dbReference>
<dbReference type="PANTHER" id="PTHR42753">
    <property type="entry name" value="MITOCHONDRIAL RIBOSOME PROTEIN L39/PROLYL-TRNA LIGASE FAMILY MEMBER"/>
    <property type="match status" value="1"/>
</dbReference>
<dbReference type="PANTHER" id="PTHR42753:SF10">
    <property type="entry name" value="PROLINE--TRNA LIGASE, MITOCHONDRIAL-RELATED"/>
    <property type="match status" value="1"/>
</dbReference>
<dbReference type="Pfam" id="PF03129">
    <property type="entry name" value="HGTP_anticodon"/>
    <property type="match status" value="1"/>
</dbReference>
<dbReference type="Pfam" id="PF00587">
    <property type="entry name" value="tRNA-synt_2b"/>
    <property type="match status" value="1"/>
</dbReference>
<dbReference type="PRINTS" id="PR01046">
    <property type="entry name" value="TRNASYNTHPRO"/>
</dbReference>
<dbReference type="SUPFAM" id="SSF52954">
    <property type="entry name" value="Class II aaRS ABD-related"/>
    <property type="match status" value="1"/>
</dbReference>
<dbReference type="SUPFAM" id="SSF55681">
    <property type="entry name" value="Class II aaRS and biotin synthetases"/>
    <property type="match status" value="1"/>
</dbReference>
<dbReference type="PROSITE" id="PS50862">
    <property type="entry name" value="AA_TRNA_LIGASE_II"/>
    <property type="match status" value="1"/>
</dbReference>
<comment type="function">
    <text evidence="1">Mitochondrial aminoacyl-tRNA synthetase that catalyzes the specific attachment of the proline amino acid (aa) to the homologous transfer RNA (tRNA), further participating in protein synthesis. The reaction occurs in a two steps: proline is first activated by ATP to form Pro-AMP and then transferred to the acceptor end of tRNA(Pro).</text>
</comment>
<comment type="catalytic activity">
    <reaction evidence="1">
        <text>tRNA(Pro) + L-proline + ATP = L-prolyl-tRNA(Pro) + AMP + diphosphate</text>
        <dbReference type="Rhea" id="RHEA:14305"/>
        <dbReference type="Rhea" id="RHEA-COMP:9700"/>
        <dbReference type="Rhea" id="RHEA-COMP:9702"/>
        <dbReference type="ChEBI" id="CHEBI:30616"/>
        <dbReference type="ChEBI" id="CHEBI:33019"/>
        <dbReference type="ChEBI" id="CHEBI:60039"/>
        <dbReference type="ChEBI" id="CHEBI:78442"/>
        <dbReference type="ChEBI" id="CHEBI:78532"/>
        <dbReference type="ChEBI" id="CHEBI:456215"/>
        <dbReference type="EC" id="6.1.1.15"/>
    </reaction>
</comment>
<comment type="subcellular location">
    <subcellularLocation>
        <location evidence="1">Mitochondrion matrix</location>
    </subcellularLocation>
</comment>
<comment type="similarity">
    <text evidence="3">Belongs to the class-II aminoacyl-tRNA synthetase family.</text>
</comment>
<accession>Q5M7W7</accession>
<sequence>MEGLLTRCRTLSALATCSLRHSRCIVRKCYHCAPGRGQRLVVSRMFQPQNLREDQVLSLEGRASDLTCKSQRLMLQVGLILPASPGCYHLMPYTVRAVEKLVRVIDQEMQAIGGQKINMPSLSPAELWRATGRWDLMGRELLRLKDRHGKEYCLGPTHEEAVTALVASQKKLSYKQLPLLLYQVTRKFRDEPRPRFGLLRGREFYMKDMYTFDSSSEAAQETYSLVCDAYCRLFDRLGLRWMKARADVGSIGGTMSHEFQLPVDIGEDRLVVCPSCHFSANTEIVDLSQKICPDCQGPLTETKGIEVGHTFYLGTKYSSIFNAHFTNAHGESLLAEMGCYGLGVTRILAAAIEVLSTEDCIRWPSLLAPYQVCIIPPKKGSKEAAATEIVERLYDDVTEALPQLRGEVLLDDRTHLTIGNRLKDANKLGYPFVIIASKRALEDPAHFEVWSQNTGEVVFLTKEGVMELLTGVHVV</sequence>
<name>SYPM_RAT</name>
<gene>
    <name type="primary">Pars2</name>
</gene>
<protein>
    <recommendedName>
        <fullName>Probable proline--tRNA ligase, mitochondrial</fullName>
        <ecNumber evidence="1">6.1.1.15</ecNumber>
    </recommendedName>
    <alternativeName>
        <fullName>Prolyl-tRNA synthetase</fullName>
        <shortName>ProRS</shortName>
    </alternativeName>
</protein>